<reference key="1">
    <citation type="journal article" date="2001" name="Nature">
        <title>Complete genome sequence of a multiple drug resistant Salmonella enterica serovar Typhi CT18.</title>
        <authorList>
            <person name="Parkhill J."/>
            <person name="Dougan G."/>
            <person name="James K.D."/>
            <person name="Thomson N.R."/>
            <person name="Pickard D."/>
            <person name="Wain J."/>
            <person name="Churcher C.M."/>
            <person name="Mungall K.L."/>
            <person name="Bentley S.D."/>
            <person name="Holden M.T.G."/>
            <person name="Sebaihia M."/>
            <person name="Baker S."/>
            <person name="Basham D."/>
            <person name="Brooks K."/>
            <person name="Chillingworth T."/>
            <person name="Connerton P."/>
            <person name="Cronin A."/>
            <person name="Davis P."/>
            <person name="Davies R.M."/>
            <person name="Dowd L."/>
            <person name="White N."/>
            <person name="Farrar J."/>
            <person name="Feltwell T."/>
            <person name="Hamlin N."/>
            <person name="Haque A."/>
            <person name="Hien T.T."/>
            <person name="Holroyd S."/>
            <person name="Jagels K."/>
            <person name="Krogh A."/>
            <person name="Larsen T.S."/>
            <person name="Leather S."/>
            <person name="Moule S."/>
            <person name="O'Gaora P."/>
            <person name="Parry C."/>
            <person name="Quail M.A."/>
            <person name="Rutherford K.M."/>
            <person name="Simmonds M."/>
            <person name="Skelton J."/>
            <person name="Stevens K."/>
            <person name="Whitehead S."/>
            <person name="Barrell B.G."/>
        </authorList>
    </citation>
    <scope>NUCLEOTIDE SEQUENCE [LARGE SCALE GENOMIC DNA]</scope>
    <source>
        <strain>CT18</strain>
    </source>
</reference>
<reference key="2">
    <citation type="journal article" date="2003" name="J. Bacteriol.">
        <title>Comparative genomics of Salmonella enterica serovar Typhi strains Ty2 and CT18.</title>
        <authorList>
            <person name="Deng W."/>
            <person name="Liou S.-R."/>
            <person name="Plunkett G. III"/>
            <person name="Mayhew G.F."/>
            <person name="Rose D.J."/>
            <person name="Burland V."/>
            <person name="Kodoyianni V."/>
            <person name="Schwartz D.C."/>
            <person name="Blattner F.R."/>
        </authorList>
    </citation>
    <scope>NUCLEOTIDE SEQUENCE [LARGE SCALE GENOMIC DNA]</scope>
    <source>
        <strain>ATCC 700931 / Ty2</strain>
    </source>
</reference>
<organism>
    <name type="scientific">Salmonella typhi</name>
    <dbReference type="NCBI Taxonomy" id="90370"/>
    <lineage>
        <taxon>Bacteria</taxon>
        <taxon>Pseudomonadati</taxon>
        <taxon>Pseudomonadota</taxon>
        <taxon>Gammaproteobacteria</taxon>
        <taxon>Enterobacterales</taxon>
        <taxon>Enterobacteriaceae</taxon>
        <taxon>Salmonella</taxon>
    </lineage>
</organism>
<protein>
    <recommendedName>
        <fullName evidence="1">ADP-L-glycero-D-manno-heptose-6-epimerase</fullName>
        <ecNumber evidence="1">5.1.3.20</ecNumber>
    </recommendedName>
    <alternativeName>
        <fullName evidence="1">ADP-L-glycero-beta-D-manno-heptose-6-epimerase</fullName>
        <shortName evidence="1">ADP-glyceromanno-heptose 6-epimerase</shortName>
        <shortName evidence="1">ADP-hep 6-epimerase</shortName>
        <shortName evidence="1">AGME</shortName>
    </alternativeName>
</protein>
<sequence>MIIVTGGAGFIGSNIVKALNDKGITDILVVDNLKDGTKFVNLVDLNIADYMDKEDFLIQIMSGEELGDIEAIFHEGACSSTTEWDGKYMMDNNYQYSKELLHYCLEREIPFLYASSAATYGGRTSDFIESREYEKPLNVYGYSKFLFDEYVRQILPEANSQIVGFRYFNVYGPREGHKGSMASVAFHLNTQLNNGESPKLFEGSENFKRDFVYVGDVAAVNLWFLESGKSGIFNLGTGRAESFQAVADATLAYHKKGSIEYIPFPDKLKGRYQAFTQADLTNLRNAGYDKPFKTVAEGVTEYMAWLNRDA</sequence>
<dbReference type="EC" id="5.1.3.20" evidence="1"/>
<dbReference type="EMBL" id="AL513382">
    <property type="protein sequence ID" value="CAD03284.1"/>
    <property type="molecule type" value="Genomic_DNA"/>
</dbReference>
<dbReference type="EMBL" id="AE014613">
    <property type="protein sequence ID" value="AAO71291.1"/>
    <property type="molecule type" value="Genomic_DNA"/>
</dbReference>
<dbReference type="RefSeq" id="NP_458217.1">
    <property type="nucleotide sequence ID" value="NC_003198.1"/>
</dbReference>
<dbReference type="RefSeq" id="WP_000587771.1">
    <property type="nucleotide sequence ID" value="NZ_WSUR01000001.1"/>
</dbReference>
<dbReference type="SMR" id="P67913"/>
<dbReference type="STRING" id="220341.gene:17587928"/>
<dbReference type="KEGG" id="stt:t3809"/>
<dbReference type="KEGG" id="sty:STY4085"/>
<dbReference type="PATRIC" id="fig|220341.7.peg.4170"/>
<dbReference type="eggNOG" id="COG0451">
    <property type="taxonomic scope" value="Bacteria"/>
</dbReference>
<dbReference type="HOGENOM" id="CLU_007383_1_3_6"/>
<dbReference type="OMA" id="FSKLCMD"/>
<dbReference type="OrthoDB" id="9803010at2"/>
<dbReference type="UniPathway" id="UPA00356">
    <property type="reaction ID" value="UER00440"/>
</dbReference>
<dbReference type="UniPathway" id="UPA00958"/>
<dbReference type="Proteomes" id="UP000000541">
    <property type="component" value="Chromosome"/>
</dbReference>
<dbReference type="Proteomes" id="UP000002670">
    <property type="component" value="Chromosome"/>
</dbReference>
<dbReference type="GO" id="GO:0008712">
    <property type="term" value="F:ADP-glyceromanno-heptose 6-epimerase activity"/>
    <property type="evidence" value="ECO:0007669"/>
    <property type="project" value="UniProtKB-UniRule"/>
</dbReference>
<dbReference type="GO" id="GO:0050661">
    <property type="term" value="F:NADP binding"/>
    <property type="evidence" value="ECO:0007669"/>
    <property type="project" value="InterPro"/>
</dbReference>
<dbReference type="GO" id="GO:0097171">
    <property type="term" value="P:ADP-L-glycero-beta-D-manno-heptose biosynthetic process"/>
    <property type="evidence" value="ECO:0007669"/>
    <property type="project" value="UniProtKB-UniPathway"/>
</dbReference>
<dbReference type="GO" id="GO:0009244">
    <property type="term" value="P:lipopolysaccharide core region biosynthetic process"/>
    <property type="evidence" value="ECO:0007669"/>
    <property type="project" value="UniProtKB-UniPathway"/>
</dbReference>
<dbReference type="CDD" id="cd05248">
    <property type="entry name" value="ADP_GME_SDR_e"/>
    <property type="match status" value="1"/>
</dbReference>
<dbReference type="Gene3D" id="3.40.50.720">
    <property type="entry name" value="NAD(P)-binding Rossmann-like Domain"/>
    <property type="match status" value="1"/>
</dbReference>
<dbReference type="Gene3D" id="3.90.25.10">
    <property type="entry name" value="UDP-galactose 4-epimerase, domain 1"/>
    <property type="match status" value="1"/>
</dbReference>
<dbReference type="HAMAP" id="MF_01601">
    <property type="entry name" value="Heptose_epimerase"/>
    <property type="match status" value="1"/>
</dbReference>
<dbReference type="InterPro" id="IPR001509">
    <property type="entry name" value="Epimerase_deHydtase"/>
</dbReference>
<dbReference type="InterPro" id="IPR011912">
    <property type="entry name" value="Heptose_epim"/>
</dbReference>
<dbReference type="InterPro" id="IPR036291">
    <property type="entry name" value="NAD(P)-bd_dom_sf"/>
</dbReference>
<dbReference type="NCBIfam" id="TIGR02197">
    <property type="entry name" value="heptose_epim"/>
    <property type="match status" value="1"/>
</dbReference>
<dbReference type="NCBIfam" id="NF008360">
    <property type="entry name" value="PRK11150.1"/>
    <property type="match status" value="1"/>
</dbReference>
<dbReference type="PANTHER" id="PTHR43103:SF3">
    <property type="entry name" value="ADP-L-GLYCERO-D-MANNO-HEPTOSE-6-EPIMERASE"/>
    <property type="match status" value="1"/>
</dbReference>
<dbReference type="PANTHER" id="PTHR43103">
    <property type="entry name" value="NUCLEOSIDE-DIPHOSPHATE-SUGAR EPIMERASE"/>
    <property type="match status" value="1"/>
</dbReference>
<dbReference type="Pfam" id="PF01370">
    <property type="entry name" value="Epimerase"/>
    <property type="match status" value="1"/>
</dbReference>
<dbReference type="SUPFAM" id="SSF51735">
    <property type="entry name" value="NAD(P)-binding Rossmann-fold domains"/>
    <property type="match status" value="1"/>
</dbReference>
<proteinExistence type="inferred from homology"/>
<keyword id="KW-0119">Carbohydrate metabolism</keyword>
<keyword id="KW-0413">Isomerase</keyword>
<keyword id="KW-0521">NADP</keyword>
<evidence type="ECO:0000255" key="1">
    <source>
        <dbReference type="HAMAP-Rule" id="MF_01601"/>
    </source>
</evidence>
<gene>
    <name evidence="1" type="primary">hldD</name>
    <name type="synonym">rfaD</name>
    <name type="ordered locus">STY4085</name>
    <name type="ordered locus">t3809</name>
</gene>
<comment type="function">
    <text evidence="1">Catalyzes the interconversion between ADP-D-glycero-beta-D-manno-heptose and ADP-L-glycero-beta-D-manno-heptose via an epimerization at carbon 6 of the heptose.</text>
</comment>
<comment type="catalytic activity">
    <reaction evidence="1">
        <text>ADP-D-glycero-beta-D-manno-heptose = ADP-L-glycero-beta-D-manno-heptose</text>
        <dbReference type="Rhea" id="RHEA:17577"/>
        <dbReference type="ChEBI" id="CHEBI:59967"/>
        <dbReference type="ChEBI" id="CHEBI:61506"/>
        <dbReference type="EC" id="5.1.3.20"/>
    </reaction>
</comment>
<comment type="cofactor">
    <cofactor evidence="1">
        <name>NADP(+)</name>
        <dbReference type="ChEBI" id="CHEBI:58349"/>
    </cofactor>
    <text evidence="1">Binds 1 NADP(+) per subunit.</text>
</comment>
<comment type="pathway">
    <text evidence="1">Nucleotide-sugar biosynthesis; ADP-L-glycero-beta-D-manno-heptose biosynthesis; ADP-L-glycero-beta-D-manno-heptose from D-glycero-beta-D-manno-heptose 7-phosphate: step 4/4.</text>
</comment>
<comment type="pathway">
    <text>Bacterial outer membrane biogenesis; LPS core biosynthesis.</text>
</comment>
<comment type="subunit">
    <text evidence="1">Homopentamer.</text>
</comment>
<comment type="domain">
    <text evidence="1">Contains a large N-terminal NADP-binding domain, and a smaller C-terminal substrate-binding domain.</text>
</comment>
<comment type="similarity">
    <text evidence="1">Belongs to the NAD(P)-dependent epimerase/dehydratase family. HldD subfamily.</text>
</comment>
<accession>P67913</accession>
<accession>P37420</accession>
<feature type="chain" id="PRO_0000205808" description="ADP-L-glycero-D-manno-heptose-6-epimerase">
    <location>
        <begin position="1"/>
        <end position="310"/>
    </location>
</feature>
<feature type="active site" description="Proton acceptor" evidence="1">
    <location>
        <position position="140"/>
    </location>
</feature>
<feature type="active site" description="Proton acceptor" evidence="1">
    <location>
        <position position="178"/>
    </location>
</feature>
<feature type="binding site" evidence="1">
    <location>
        <begin position="10"/>
        <end position="11"/>
    </location>
    <ligand>
        <name>NADP(+)</name>
        <dbReference type="ChEBI" id="CHEBI:58349"/>
    </ligand>
</feature>
<feature type="binding site" evidence="1">
    <location>
        <begin position="31"/>
        <end position="32"/>
    </location>
    <ligand>
        <name>NADP(+)</name>
        <dbReference type="ChEBI" id="CHEBI:58349"/>
    </ligand>
</feature>
<feature type="binding site" evidence="1">
    <location>
        <position position="38"/>
    </location>
    <ligand>
        <name>NADP(+)</name>
        <dbReference type="ChEBI" id="CHEBI:58349"/>
    </ligand>
</feature>
<feature type="binding site" evidence="1">
    <location>
        <position position="53"/>
    </location>
    <ligand>
        <name>NADP(+)</name>
        <dbReference type="ChEBI" id="CHEBI:58349"/>
    </ligand>
</feature>
<feature type="binding site" evidence="1">
    <location>
        <begin position="75"/>
        <end position="79"/>
    </location>
    <ligand>
        <name>NADP(+)</name>
        <dbReference type="ChEBI" id="CHEBI:58349"/>
    </ligand>
</feature>
<feature type="binding site" evidence="1">
    <location>
        <position position="92"/>
    </location>
    <ligand>
        <name>NADP(+)</name>
        <dbReference type="ChEBI" id="CHEBI:58349"/>
    </ligand>
</feature>
<feature type="binding site" evidence="1">
    <location>
        <position position="144"/>
    </location>
    <ligand>
        <name>NADP(+)</name>
        <dbReference type="ChEBI" id="CHEBI:58349"/>
    </ligand>
</feature>
<feature type="binding site" evidence="1">
    <location>
        <position position="169"/>
    </location>
    <ligand>
        <name>substrate</name>
    </ligand>
</feature>
<feature type="binding site" evidence="1">
    <location>
        <position position="170"/>
    </location>
    <ligand>
        <name>NADP(+)</name>
        <dbReference type="ChEBI" id="CHEBI:58349"/>
    </ligand>
</feature>
<feature type="binding site" evidence="1">
    <location>
        <position position="178"/>
    </location>
    <ligand>
        <name>NADP(+)</name>
        <dbReference type="ChEBI" id="CHEBI:58349"/>
    </ligand>
</feature>
<feature type="binding site" evidence="1">
    <location>
        <position position="180"/>
    </location>
    <ligand>
        <name>substrate</name>
    </ligand>
</feature>
<feature type="binding site" evidence="1">
    <location>
        <position position="187"/>
    </location>
    <ligand>
        <name>substrate</name>
    </ligand>
</feature>
<feature type="binding site" evidence="1">
    <location>
        <begin position="201"/>
        <end position="204"/>
    </location>
    <ligand>
        <name>substrate</name>
    </ligand>
</feature>
<feature type="binding site" evidence="1">
    <location>
        <position position="209"/>
    </location>
    <ligand>
        <name>substrate</name>
    </ligand>
</feature>
<feature type="binding site" evidence="1">
    <location>
        <position position="272"/>
    </location>
    <ligand>
        <name>substrate</name>
    </ligand>
</feature>
<name>HLDD_SALTI</name>